<name>Y2532_BEUC1</name>
<reference key="1">
    <citation type="journal article" date="2009" name="Stand. Genomic Sci.">
        <title>Complete genome sequence of Beutenbergia cavernae type strain (HKI 0122).</title>
        <authorList>
            <person name="Land M."/>
            <person name="Pukall R."/>
            <person name="Abt B."/>
            <person name="Goker M."/>
            <person name="Rohde M."/>
            <person name="Glavina Del Rio T."/>
            <person name="Tice H."/>
            <person name="Copeland A."/>
            <person name="Cheng J.F."/>
            <person name="Lucas S."/>
            <person name="Chen F."/>
            <person name="Nolan M."/>
            <person name="Bruce D."/>
            <person name="Goodwin L."/>
            <person name="Pitluck S."/>
            <person name="Ivanova N."/>
            <person name="Mavromatis K."/>
            <person name="Ovchinnikova G."/>
            <person name="Pati A."/>
            <person name="Chen A."/>
            <person name="Palaniappan K."/>
            <person name="Hauser L."/>
            <person name="Chang Y.J."/>
            <person name="Jefferies C.C."/>
            <person name="Saunders E."/>
            <person name="Brettin T."/>
            <person name="Detter J.C."/>
            <person name="Han C."/>
            <person name="Chain P."/>
            <person name="Bristow J."/>
            <person name="Eisen J.A."/>
            <person name="Markowitz V."/>
            <person name="Hugenholtz P."/>
            <person name="Kyrpides N.C."/>
            <person name="Klenk H.P."/>
            <person name="Lapidus A."/>
        </authorList>
    </citation>
    <scope>NUCLEOTIDE SEQUENCE [LARGE SCALE GENOMIC DNA]</scope>
    <source>
        <strain>ATCC BAA-8 / DSM 12333 / CCUG 43141 / JCM 11478 / NBRC 16432 / NCIMB 13614 / HKI 0122</strain>
    </source>
</reference>
<dbReference type="EMBL" id="CP001618">
    <property type="protein sequence ID" value="ACQ80779.1"/>
    <property type="molecule type" value="Genomic_DNA"/>
</dbReference>
<dbReference type="RefSeq" id="WP_015883019.1">
    <property type="nucleotide sequence ID" value="NC_012669.1"/>
</dbReference>
<dbReference type="SMR" id="C5BWW3"/>
<dbReference type="STRING" id="471853.Bcav_2532"/>
<dbReference type="KEGG" id="bcv:Bcav_2532"/>
<dbReference type="eggNOG" id="COG0792">
    <property type="taxonomic scope" value="Bacteria"/>
</dbReference>
<dbReference type="HOGENOM" id="CLU_115353_2_3_11"/>
<dbReference type="OrthoDB" id="9794876at2"/>
<dbReference type="Proteomes" id="UP000007962">
    <property type="component" value="Chromosome"/>
</dbReference>
<dbReference type="GO" id="GO:0003676">
    <property type="term" value="F:nucleic acid binding"/>
    <property type="evidence" value="ECO:0007669"/>
    <property type="project" value="InterPro"/>
</dbReference>
<dbReference type="CDD" id="cd20736">
    <property type="entry name" value="PoNe_Nuclease"/>
    <property type="match status" value="1"/>
</dbReference>
<dbReference type="Gene3D" id="3.40.1350.10">
    <property type="match status" value="1"/>
</dbReference>
<dbReference type="HAMAP" id="MF_00048">
    <property type="entry name" value="UPF0102"/>
    <property type="match status" value="1"/>
</dbReference>
<dbReference type="InterPro" id="IPR011335">
    <property type="entry name" value="Restrct_endonuc-II-like"/>
</dbReference>
<dbReference type="InterPro" id="IPR011856">
    <property type="entry name" value="tRNA_endonuc-like_dom_sf"/>
</dbReference>
<dbReference type="InterPro" id="IPR003509">
    <property type="entry name" value="UPF0102_YraN-like"/>
</dbReference>
<dbReference type="NCBIfam" id="NF009150">
    <property type="entry name" value="PRK12497.1-3"/>
    <property type="match status" value="1"/>
</dbReference>
<dbReference type="NCBIfam" id="NF009154">
    <property type="entry name" value="PRK12497.3-3"/>
    <property type="match status" value="1"/>
</dbReference>
<dbReference type="NCBIfam" id="TIGR00252">
    <property type="entry name" value="YraN family protein"/>
    <property type="match status" value="1"/>
</dbReference>
<dbReference type="PANTHER" id="PTHR34039">
    <property type="entry name" value="UPF0102 PROTEIN YRAN"/>
    <property type="match status" value="1"/>
</dbReference>
<dbReference type="PANTHER" id="PTHR34039:SF1">
    <property type="entry name" value="UPF0102 PROTEIN YRAN"/>
    <property type="match status" value="1"/>
</dbReference>
<dbReference type="Pfam" id="PF02021">
    <property type="entry name" value="UPF0102"/>
    <property type="match status" value="1"/>
</dbReference>
<dbReference type="SUPFAM" id="SSF52980">
    <property type="entry name" value="Restriction endonuclease-like"/>
    <property type="match status" value="1"/>
</dbReference>
<keyword id="KW-1185">Reference proteome</keyword>
<evidence type="ECO:0000255" key="1">
    <source>
        <dbReference type="HAMAP-Rule" id="MF_00048"/>
    </source>
</evidence>
<protein>
    <recommendedName>
        <fullName evidence="1">UPF0102 protein Bcav_2532</fullName>
    </recommendedName>
</protein>
<comment type="similarity">
    <text evidence="1">Belongs to the UPF0102 family.</text>
</comment>
<feature type="chain" id="PRO_1000202209" description="UPF0102 protein Bcav_2532">
    <location>
        <begin position="1"/>
        <end position="118"/>
    </location>
</feature>
<accession>C5BWW3</accession>
<organism>
    <name type="scientific">Beutenbergia cavernae (strain ATCC BAA-8 / DSM 12333 / CCUG 43141 / JCM 11478 / NBRC 16432 / NCIMB 13614 / HKI 0122)</name>
    <dbReference type="NCBI Taxonomy" id="471853"/>
    <lineage>
        <taxon>Bacteria</taxon>
        <taxon>Bacillati</taxon>
        <taxon>Actinomycetota</taxon>
        <taxon>Actinomycetes</taxon>
        <taxon>Micrococcales</taxon>
        <taxon>Beutenbergiaceae</taxon>
        <taxon>Beutenbergia</taxon>
    </lineage>
</organism>
<sequence>MRAKDAIGAYGERVAGRWLEAEGLEVVERNWRCPDGELDLVARDGETLVFVEVKTRSSLAFGHPGEAVTRLKLARLRRLAARWLAEHDAHAREVRIDVVAVLRTRAGAARVEHLRGVG</sequence>
<proteinExistence type="inferred from homology"/>
<gene>
    <name type="ordered locus">Bcav_2532</name>
</gene>